<geneLocation type="plasmid">
    <name>sym pNGR234a</name>
</geneLocation>
<comment type="function">
    <text evidence="1 2">ATPase component of the type III secretion system (T3SS), also called injectisome, which is used to inject bacterial effector proteins into eukaryotic host cells (By similarity). Acts as a molecular motor to provide the energy that is required for the export of proteins (By similarity). Required for type III secretion apparatus (T3SA) formation, proper protein secretion, host cell invasion and virulence (By similarity). May play a critical role in T3SS substrate recognition, disassembly of the effector/chaperone complex and unfolding of the effector in an ATP-dependent manner prior to secretion (By similarity).</text>
</comment>
<comment type="catalytic activity">
    <reaction evidence="2">
        <text>ATP + H2O + cellular proteinSide 1 = ADP + phosphate + cellular proteinSide 2.</text>
        <dbReference type="EC" id="7.4.2.8"/>
    </reaction>
</comment>
<comment type="subunit">
    <text evidence="2">The core secretion machinery of the T3SS is composed of approximately 20 different proteins, including cytoplasmic components, a base, an export apparatus and a needle (By similarity). This subunit is part of the cytosolic complex (By similarity). Forms homohexamers (By similarity).</text>
</comment>
<comment type="subcellular location">
    <subcellularLocation>
        <location evidence="2">Cytoplasm</location>
    </subcellularLocation>
</comment>
<comment type="similarity">
    <text evidence="3">Belongs to the ATPase alpha/beta chains family. T3SS ATPase subfamily.</text>
</comment>
<organism>
    <name type="scientific">Sinorhizobium fredii (strain NBRC 101917 / NGR234)</name>
    <dbReference type="NCBI Taxonomy" id="394"/>
    <lineage>
        <taxon>Bacteria</taxon>
        <taxon>Pseudomonadati</taxon>
        <taxon>Pseudomonadota</taxon>
        <taxon>Alphaproteobacteria</taxon>
        <taxon>Hyphomicrobiales</taxon>
        <taxon>Rhizobiaceae</taxon>
        <taxon>Sinorhizobium/Ensifer group</taxon>
        <taxon>Sinorhizobium</taxon>
    </lineage>
</organism>
<gene>
    <name evidence="2" type="primary">sctN</name>
    <name type="ordered locus">NGR_a00640</name>
    <name type="ORF">y4yI</name>
</gene>
<evidence type="ECO:0000250" key="1">
    <source>
        <dbReference type="UniProtKB" id="P0A1B9"/>
    </source>
</evidence>
<evidence type="ECO:0000250" key="2">
    <source>
        <dbReference type="UniProtKB" id="P0A1C1"/>
    </source>
</evidence>
<evidence type="ECO:0000305" key="3"/>
<reference key="1">
    <citation type="journal article" date="1997" name="Nature">
        <title>Molecular basis of symbiosis between Rhizobium and legumes.</title>
        <authorList>
            <person name="Freiberg C.A."/>
            <person name="Fellay R."/>
            <person name="Bairoch A."/>
            <person name="Broughton W.J."/>
            <person name="Rosenthal A."/>
            <person name="Perret X."/>
        </authorList>
    </citation>
    <scope>NUCLEOTIDE SEQUENCE [LARGE SCALE GENOMIC DNA]</scope>
    <source>
        <strain>NBRC 101917 / NGR234</strain>
    </source>
</reference>
<reference key="2">
    <citation type="journal article" date="2009" name="Appl. Environ. Microbiol.">
        <title>Rhizobium sp. strain NGR234 possesses a remarkable number of secretion systems.</title>
        <authorList>
            <person name="Schmeisser C."/>
            <person name="Liesegang H."/>
            <person name="Krysciak D."/>
            <person name="Bakkou N."/>
            <person name="Le Quere A."/>
            <person name="Wollherr A."/>
            <person name="Heinemeyer I."/>
            <person name="Morgenstern B."/>
            <person name="Pommerening-Roeser A."/>
            <person name="Flores M."/>
            <person name="Palacios R."/>
            <person name="Brenner S."/>
            <person name="Gottschalk G."/>
            <person name="Schmitz R.A."/>
            <person name="Broughton W.J."/>
            <person name="Perret X."/>
            <person name="Strittmatter A.W."/>
            <person name="Streit W.R."/>
        </authorList>
    </citation>
    <scope>NUCLEOTIDE SEQUENCE [LARGE SCALE GENOMIC DNA]</scope>
    <source>
        <strain>NBRC 101917 / NGR234</strain>
    </source>
</reference>
<feature type="chain" id="PRO_0000144711" description="Type 3 secretion system ATPase">
    <location>
        <begin position="1"/>
        <end position="451"/>
    </location>
</feature>
<feature type="binding site" evidence="2">
    <location>
        <begin position="184"/>
        <end position="189"/>
    </location>
    <ligand>
        <name>ATP</name>
        <dbReference type="ChEBI" id="CHEBI:30616"/>
    </ligand>
</feature>
<proteinExistence type="inferred from homology"/>
<protein>
    <recommendedName>
        <fullName evidence="2">Type 3 secretion system ATPase</fullName>
        <shortName evidence="2">T3SS ATPase</shortName>
        <ecNumber evidence="2">7.4.2.8</ecNumber>
    </recommendedName>
</protein>
<name>SCTN_SINFN</name>
<accession>P55717</accession>
<dbReference type="EC" id="7.4.2.8" evidence="2"/>
<dbReference type="EMBL" id="U00090">
    <property type="protein sequence ID" value="AAB91948.1"/>
    <property type="molecule type" value="Genomic_DNA"/>
</dbReference>
<dbReference type="RefSeq" id="NP_444161.1">
    <property type="nucleotide sequence ID" value="NC_000914.2"/>
</dbReference>
<dbReference type="RefSeq" id="WP_010875105.1">
    <property type="nucleotide sequence ID" value="NC_000914.2"/>
</dbReference>
<dbReference type="SMR" id="P55717"/>
<dbReference type="KEGG" id="rhi:NGR_a00640"/>
<dbReference type="PATRIC" id="fig|394.7.peg.60"/>
<dbReference type="eggNOG" id="COG1157">
    <property type="taxonomic scope" value="Bacteria"/>
</dbReference>
<dbReference type="HOGENOM" id="CLU_022398_5_1_5"/>
<dbReference type="OrthoDB" id="9801639at2"/>
<dbReference type="Proteomes" id="UP000001054">
    <property type="component" value="Plasmid pNGR234a"/>
</dbReference>
<dbReference type="GO" id="GO:0005737">
    <property type="term" value="C:cytoplasm"/>
    <property type="evidence" value="ECO:0007669"/>
    <property type="project" value="UniProtKB-SubCell"/>
</dbReference>
<dbReference type="GO" id="GO:0030257">
    <property type="term" value="C:type III protein secretion system complex"/>
    <property type="evidence" value="ECO:0007669"/>
    <property type="project" value="InterPro"/>
</dbReference>
<dbReference type="GO" id="GO:0005524">
    <property type="term" value="F:ATP binding"/>
    <property type="evidence" value="ECO:0007669"/>
    <property type="project" value="UniProtKB-KW"/>
</dbReference>
<dbReference type="GO" id="GO:0016887">
    <property type="term" value="F:ATP hydrolysis activity"/>
    <property type="evidence" value="ECO:0007669"/>
    <property type="project" value="InterPro"/>
</dbReference>
<dbReference type="GO" id="GO:0008564">
    <property type="term" value="F:protein-exporting ATPase activity"/>
    <property type="evidence" value="ECO:0007669"/>
    <property type="project" value="UniProtKB-EC"/>
</dbReference>
<dbReference type="GO" id="GO:0046933">
    <property type="term" value="F:proton-transporting ATP synthase activity, rotational mechanism"/>
    <property type="evidence" value="ECO:0007669"/>
    <property type="project" value="TreeGrafter"/>
</dbReference>
<dbReference type="GO" id="GO:0046961">
    <property type="term" value="F:proton-transporting ATPase activity, rotational mechanism"/>
    <property type="evidence" value="ECO:0007669"/>
    <property type="project" value="InterPro"/>
</dbReference>
<dbReference type="GO" id="GO:0030254">
    <property type="term" value="P:protein secretion by the type III secretion system"/>
    <property type="evidence" value="ECO:0007669"/>
    <property type="project" value="InterPro"/>
</dbReference>
<dbReference type="CDD" id="cd18117">
    <property type="entry name" value="ATP-synt_flagellum-secretory_path_III_N"/>
    <property type="match status" value="1"/>
</dbReference>
<dbReference type="CDD" id="cd01136">
    <property type="entry name" value="ATPase_flagellum-secretory_path_III"/>
    <property type="match status" value="1"/>
</dbReference>
<dbReference type="FunFam" id="3.40.50.12240:FF:000002">
    <property type="entry name" value="Flagellum-specific ATP synthase FliI"/>
    <property type="match status" value="1"/>
</dbReference>
<dbReference type="Gene3D" id="3.40.50.12240">
    <property type="match status" value="1"/>
</dbReference>
<dbReference type="InterPro" id="IPR003593">
    <property type="entry name" value="AAA+_ATPase"/>
</dbReference>
<dbReference type="InterPro" id="IPR020003">
    <property type="entry name" value="ATPase_a/bsu_AS"/>
</dbReference>
<dbReference type="InterPro" id="IPR050053">
    <property type="entry name" value="ATPase_alpha/beta_chains"/>
</dbReference>
<dbReference type="InterPro" id="IPR004100">
    <property type="entry name" value="ATPase_F1/V1/A1_a/bsu_N"/>
</dbReference>
<dbReference type="InterPro" id="IPR000194">
    <property type="entry name" value="ATPase_F1/V1/A1_a/bsu_nucl-bd"/>
</dbReference>
<dbReference type="InterPro" id="IPR005714">
    <property type="entry name" value="ATPase_T3SS_FliI/YscN"/>
</dbReference>
<dbReference type="InterPro" id="IPR013380">
    <property type="entry name" value="ATPase_T3SS_SctN"/>
</dbReference>
<dbReference type="InterPro" id="IPR027417">
    <property type="entry name" value="P-loop_NTPase"/>
</dbReference>
<dbReference type="InterPro" id="IPR040627">
    <property type="entry name" value="T3SS_ATPase_C"/>
</dbReference>
<dbReference type="NCBIfam" id="TIGR01026">
    <property type="entry name" value="fliI_yscN"/>
    <property type="match status" value="1"/>
</dbReference>
<dbReference type="NCBIfam" id="TIGR02546">
    <property type="entry name" value="III_secr_ATP"/>
    <property type="match status" value="1"/>
</dbReference>
<dbReference type="PANTHER" id="PTHR15184">
    <property type="entry name" value="ATP SYNTHASE"/>
    <property type="match status" value="1"/>
</dbReference>
<dbReference type="PANTHER" id="PTHR15184:SF9">
    <property type="entry name" value="SPI-1 TYPE 3 SECRETION SYSTEM ATPASE"/>
    <property type="match status" value="1"/>
</dbReference>
<dbReference type="Pfam" id="PF00006">
    <property type="entry name" value="ATP-synt_ab"/>
    <property type="match status" value="1"/>
</dbReference>
<dbReference type="Pfam" id="PF02874">
    <property type="entry name" value="ATP-synt_ab_N"/>
    <property type="match status" value="1"/>
</dbReference>
<dbReference type="Pfam" id="PF18269">
    <property type="entry name" value="T3SS_ATPase_C"/>
    <property type="match status" value="1"/>
</dbReference>
<dbReference type="SMART" id="SM00382">
    <property type="entry name" value="AAA"/>
    <property type="match status" value="1"/>
</dbReference>
<dbReference type="SUPFAM" id="SSF52540">
    <property type="entry name" value="P-loop containing nucleoside triphosphate hydrolases"/>
    <property type="match status" value="1"/>
</dbReference>
<dbReference type="PROSITE" id="PS00152">
    <property type="entry name" value="ATPASE_ALPHA_BETA"/>
    <property type="match status" value="1"/>
</dbReference>
<sequence length="451" mass="48766">MITPVPQHNSLEGTPLEPAISSLWSTAKRIDTRVVRGRITRAVGTLIHAVLPEARIGELCLLQDTRTGLSLEAEVIGLLDNGVLLTPIGGLAGLSSRAEVVSTGRMREVPIGPDLLGRVIDSRCRPLDGKGEVKTTEVRPLHGRAPNPMTRRMVERPFPLGVRALDGLLTCGEGQRIGIYGEPGGGKSTLISQIVKGAAADVVIVALIGERGREVREFVERHLGEEGLRRAIVVVETSDRSATERAQCAPMATALAEYFREQGLRVALLLDSLTRFCRAMREIGLAAGEPPTRRGFPPSVFAALPGLLERAGLGERGSITAFYTVLVEGDGTGDPIAEESRGILDGHIVLSRALAARSHFPAIDVLQSRSRVMDAVVSETHRKAASFFRDLLARYAECEFLINVGEYKQGGDPLTDRAVASIGELKEFLRQSEDEVSDFEETVGWMSRLTS</sequence>
<keyword id="KW-0067">ATP-binding</keyword>
<keyword id="KW-0963">Cytoplasm</keyword>
<keyword id="KW-0547">Nucleotide-binding</keyword>
<keyword id="KW-0614">Plasmid</keyword>
<keyword id="KW-0653">Protein transport</keyword>
<keyword id="KW-1185">Reference proteome</keyword>
<keyword id="KW-1278">Translocase</keyword>
<keyword id="KW-0813">Transport</keyword>
<keyword id="KW-0843">Virulence</keyword>